<feature type="chain" id="PRO_1000080691" description="RNA-binding protein Hfq">
    <location>
        <begin position="1"/>
        <end position="93"/>
    </location>
</feature>
<feature type="domain" description="Sm" evidence="2">
    <location>
        <begin position="9"/>
        <end position="68"/>
    </location>
</feature>
<feature type="region of interest" description="Disordered" evidence="3">
    <location>
        <begin position="70"/>
        <end position="93"/>
    </location>
</feature>
<dbReference type="EMBL" id="CP000821">
    <property type="protein sequence ID" value="ABV35408.1"/>
    <property type="molecule type" value="Genomic_DNA"/>
</dbReference>
<dbReference type="RefSeq" id="WP_012141144.1">
    <property type="nucleotide sequence ID" value="NC_009831.1"/>
</dbReference>
<dbReference type="SMR" id="A8FRD5"/>
<dbReference type="STRING" id="425104.Ssed_0797"/>
<dbReference type="KEGG" id="sse:Ssed_0797"/>
<dbReference type="eggNOG" id="COG1923">
    <property type="taxonomic scope" value="Bacteria"/>
</dbReference>
<dbReference type="HOGENOM" id="CLU_113688_2_2_6"/>
<dbReference type="OrthoDB" id="9799751at2"/>
<dbReference type="Proteomes" id="UP000002015">
    <property type="component" value="Chromosome"/>
</dbReference>
<dbReference type="GO" id="GO:0005829">
    <property type="term" value="C:cytosol"/>
    <property type="evidence" value="ECO:0007669"/>
    <property type="project" value="TreeGrafter"/>
</dbReference>
<dbReference type="GO" id="GO:0003723">
    <property type="term" value="F:RNA binding"/>
    <property type="evidence" value="ECO:0007669"/>
    <property type="project" value="UniProtKB-UniRule"/>
</dbReference>
<dbReference type="GO" id="GO:0006355">
    <property type="term" value="P:regulation of DNA-templated transcription"/>
    <property type="evidence" value="ECO:0007669"/>
    <property type="project" value="InterPro"/>
</dbReference>
<dbReference type="GO" id="GO:0043487">
    <property type="term" value="P:regulation of RNA stability"/>
    <property type="evidence" value="ECO:0007669"/>
    <property type="project" value="TreeGrafter"/>
</dbReference>
<dbReference type="GO" id="GO:0045974">
    <property type="term" value="P:regulation of translation, ncRNA-mediated"/>
    <property type="evidence" value="ECO:0007669"/>
    <property type="project" value="TreeGrafter"/>
</dbReference>
<dbReference type="CDD" id="cd01716">
    <property type="entry name" value="Hfq"/>
    <property type="match status" value="1"/>
</dbReference>
<dbReference type="FunFam" id="2.30.30.100:FF:000001">
    <property type="entry name" value="RNA-binding protein Hfq"/>
    <property type="match status" value="1"/>
</dbReference>
<dbReference type="Gene3D" id="2.30.30.100">
    <property type="match status" value="1"/>
</dbReference>
<dbReference type="HAMAP" id="MF_00436">
    <property type="entry name" value="Hfq"/>
    <property type="match status" value="1"/>
</dbReference>
<dbReference type="InterPro" id="IPR005001">
    <property type="entry name" value="Hfq"/>
</dbReference>
<dbReference type="InterPro" id="IPR010920">
    <property type="entry name" value="LSM_dom_sf"/>
</dbReference>
<dbReference type="InterPro" id="IPR047575">
    <property type="entry name" value="Sm"/>
</dbReference>
<dbReference type="NCBIfam" id="TIGR02383">
    <property type="entry name" value="Hfq"/>
    <property type="match status" value="1"/>
</dbReference>
<dbReference type="NCBIfam" id="NF001602">
    <property type="entry name" value="PRK00395.1"/>
    <property type="match status" value="1"/>
</dbReference>
<dbReference type="PANTHER" id="PTHR34772">
    <property type="entry name" value="RNA-BINDING PROTEIN HFQ"/>
    <property type="match status" value="1"/>
</dbReference>
<dbReference type="PANTHER" id="PTHR34772:SF1">
    <property type="entry name" value="RNA-BINDING PROTEIN HFQ"/>
    <property type="match status" value="1"/>
</dbReference>
<dbReference type="Pfam" id="PF17209">
    <property type="entry name" value="Hfq"/>
    <property type="match status" value="1"/>
</dbReference>
<dbReference type="SUPFAM" id="SSF50182">
    <property type="entry name" value="Sm-like ribonucleoproteins"/>
    <property type="match status" value="1"/>
</dbReference>
<dbReference type="PROSITE" id="PS52002">
    <property type="entry name" value="SM"/>
    <property type="match status" value="1"/>
</dbReference>
<keyword id="KW-1185">Reference proteome</keyword>
<keyword id="KW-0694">RNA-binding</keyword>
<keyword id="KW-0346">Stress response</keyword>
<comment type="function">
    <text evidence="1">RNA chaperone that binds small regulatory RNA (sRNAs) and mRNAs to facilitate mRNA translational regulation in response to envelope stress, environmental stress and changes in metabolite concentrations. Also binds with high specificity to tRNAs.</text>
</comment>
<comment type="subunit">
    <text evidence="1">Homohexamer.</text>
</comment>
<comment type="similarity">
    <text evidence="1">Belongs to the Hfq family.</text>
</comment>
<gene>
    <name evidence="1" type="primary">hfq</name>
    <name type="ordered locus">Ssed_0797</name>
</gene>
<reference key="1">
    <citation type="submission" date="2007-08" db="EMBL/GenBank/DDBJ databases">
        <title>Complete sequence of Shewanella sediminis HAW-EB3.</title>
        <authorList>
            <consortium name="US DOE Joint Genome Institute"/>
            <person name="Copeland A."/>
            <person name="Lucas S."/>
            <person name="Lapidus A."/>
            <person name="Barry K."/>
            <person name="Glavina del Rio T."/>
            <person name="Dalin E."/>
            <person name="Tice H."/>
            <person name="Pitluck S."/>
            <person name="Chertkov O."/>
            <person name="Brettin T."/>
            <person name="Bruce D."/>
            <person name="Detter J.C."/>
            <person name="Han C."/>
            <person name="Schmutz J."/>
            <person name="Larimer F."/>
            <person name="Land M."/>
            <person name="Hauser L."/>
            <person name="Kyrpides N."/>
            <person name="Kim E."/>
            <person name="Zhao J.-S."/>
            <person name="Richardson P."/>
        </authorList>
    </citation>
    <scope>NUCLEOTIDE SEQUENCE [LARGE SCALE GENOMIC DNA]</scope>
    <source>
        <strain>HAW-EB3</strain>
    </source>
</reference>
<proteinExistence type="inferred from homology"/>
<evidence type="ECO:0000255" key="1">
    <source>
        <dbReference type="HAMAP-Rule" id="MF_00436"/>
    </source>
</evidence>
<evidence type="ECO:0000255" key="2">
    <source>
        <dbReference type="PROSITE-ProRule" id="PRU01346"/>
    </source>
</evidence>
<evidence type="ECO:0000256" key="3">
    <source>
        <dbReference type="SAM" id="MobiDB-lite"/>
    </source>
</evidence>
<sequence length="93" mass="10226">MAKGQSLQDPFLNALRRERVPVSIYLVNGIKLQGQVESFDQFVILLKNTVSQMVYKHAISTVVPARPFNVNSHTAAPSPAGGFNGQQDDNNDQ</sequence>
<name>HFQ_SHESH</name>
<protein>
    <recommendedName>
        <fullName evidence="1">RNA-binding protein Hfq</fullName>
    </recommendedName>
</protein>
<organism>
    <name type="scientific">Shewanella sediminis (strain HAW-EB3)</name>
    <dbReference type="NCBI Taxonomy" id="425104"/>
    <lineage>
        <taxon>Bacteria</taxon>
        <taxon>Pseudomonadati</taxon>
        <taxon>Pseudomonadota</taxon>
        <taxon>Gammaproteobacteria</taxon>
        <taxon>Alteromonadales</taxon>
        <taxon>Shewanellaceae</taxon>
        <taxon>Shewanella</taxon>
    </lineage>
</organism>
<accession>A8FRD5</accession>